<dbReference type="EC" id="4.2.1.59" evidence="1"/>
<dbReference type="EMBL" id="CP000783">
    <property type="protein sequence ID" value="ABU78384.1"/>
    <property type="molecule type" value="Genomic_DNA"/>
</dbReference>
<dbReference type="RefSeq" id="WP_004386127.1">
    <property type="nucleotide sequence ID" value="NC_009778.1"/>
</dbReference>
<dbReference type="SMR" id="A7MI19"/>
<dbReference type="GeneID" id="92807595"/>
<dbReference type="KEGG" id="esa:ESA_03161"/>
<dbReference type="HOGENOM" id="CLU_078912_1_0_6"/>
<dbReference type="Proteomes" id="UP000000260">
    <property type="component" value="Chromosome"/>
</dbReference>
<dbReference type="GO" id="GO:0005737">
    <property type="term" value="C:cytoplasm"/>
    <property type="evidence" value="ECO:0007669"/>
    <property type="project" value="UniProtKB-SubCell"/>
</dbReference>
<dbReference type="GO" id="GO:0016020">
    <property type="term" value="C:membrane"/>
    <property type="evidence" value="ECO:0007669"/>
    <property type="project" value="GOC"/>
</dbReference>
<dbReference type="GO" id="GO:0019171">
    <property type="term" value="F:(3R)-hydroxyacyl-[acyl-carrier-protein] dehydratase activity"/>
    <property type="evidence" value="ECO:0007669"/>
    <property type="project" value="UniProtKB-EC"/>
</dbReference>
<dbReference type="GO" id="GO:0006633">
    <property type="term" value="P:fatty acid biosynthetic process"/>
    <property type="evidence" value="ECO:0007669"/>
    <property type="project" value="UniProtKB-UniRule"/>
</dbReference>
<dbReference type="GO" id="GO:0009245">
    <property type="term" value="P:lipid A biosynthetic process"/>
    <property type="evidence" value="ECO:0007669"/>
    <property type="project" value="UniProtKB-UniRule"/>
</dbReference>
<dbReference type="CDD" id="cd01288">
    <property type="entry name" value="FabZ"/>
    <property type="match status" value="1"/>
</dbReference>
<dbReference type="FunFam" id="3.10.129.10:FF:000001">
    <property type="entry name" value="3-hydroxyacyl-[acyl-carrier-protein] dehydratase FabZ"/>
    <property type="match status" value="1"/>
</dbReference>
<dbReference type="Gene3D" id="3.10.129.10">
    <property type="entry name" value="Hotdog Thioesterase"/>
    <property type="match status" value="1"/>
</dbReference>
<dbReference type="HAMAP" id="MF_00406">
    <property type="entry name" value="FabZ"/>
    <property type="match status" value="1"/>
</dbReference>
<dbReference type="InterPro" id="IPR013114">
    <property type="entry name" value="FabA_FabZ"/>
</dbReference>
<dbReference type="InterPro" id="IPR010084">
    <property type="entry name" value="FabZ"/>
</dbReference>
<dbReference type="InterPro" id="IPR029069">
    <property type="entry name" value="HotDog_dom_sf"/>
</dbReference>
<dbReference type="NCBIfam" id="TIGR01750">
    <property type="entry name" value="fabZ"/>
    <property type="match status" value="1"/>
</dbReference>
<dbReference type="NCBIfam" id="NF000582">
    <property type="entry name" value="PRK00006.1"/>
    <property type="match status" value="1"/>
</dbReference>
<dbReference type="PANTHER" id="PTHR30272">
    <property type="entry name" value="3-HYDROXYACYL-[ACYL-CARRIER-PROTEIN] DEHYDRATASE"/>
    <property type="match status" value="1"/>
</dbReference>
<dbReference type="PANTHER" id="PTHR30272:SF1">
    <property type="entry name" value="3-HYDROXYACYL-[ACYL-CARRIER-PROTEIN] DEHYDRATASE"/>
    <property type="match status" value="1"/>
</dbReference>
<dbReference type="Pfam" id="PF07977">
    <property type="entry name" value="FabA"/>
    <property type="match status" value="1"/>
</dbReference>
<dbReference type="SUPFAM" id="SSF54637">
    <property type="entry name" value="Thioesterase/thiol ester dehydrase-isomerase"/>
    <property type="match status" value="1"/>
</dbReference>
<evidence type="ECO:0000255" key="1">
    <source>
        <dbReference type="HAMAP-Rule" id="MF_00406"/>
    </source>
</evidence>
<proteinExistence type="inferred from homology"/>
<protein>
    <recommendedName>
        <fullName evidence="1">3-hydroxyacyl-[acyl-carrier-protein] dehydratase FabZ</fullName>
        <ecNumber evidence="1">4.2.1.59</ecNumber>
    </recommendedName>
    <alternativeName>
        <fullName evidence="1">(3R)-hydroxymyristoyl-[acyl-carrier-protein] dehydratase</fullName>
        <shortName evidence="1">(3R)-hydroxymyristoyl-ACP dehydrase</shortName>
    </alternativeName>
    <alternativeName>
        <fullName evidence="1">Beta-hydroxyacyl-ACP dehydratase</fullName>
    </alternativeName>
</protein>
<reference key="1">
    <citation type="journal article" date="2010" name="PLoS ONE">
        <title>Genome sequence of Cronobacter sakazakii BAA-894 and comparative genomic hybridization analysis with other Cronobacter species.</title>
        <authorList>
            <person name="Kucerova E."/>
            <person name="Clifton S.W."/>
            <person name="Xia X.Q."/>
            <person name="Long F."/>
            <person name="Porwollik S."/>
            <person name="Fulton L."/>
            <person name="Fronick C."/>
            <person name="Minx P."/>
            <person name="Kyung K."/>
            <person name="Warren W."/>
            <person name="Fulton R."/>
            <person name="Feng D."/>
            <person name="Wollam A."/>
            <person name="Shah N."/>
            <person name="Bhonagiri V."/>
            <person name="Nash W.E."/>
            <person name="Hallsworth-Pepin K."/>
            <person name="Wilson R.K."/>
            <person name="McClelland M."/>
            <person name="Forsythe S.J."/>
        </authorList>
    </citation>
    <scope>NUCLEOTIDE SEQUENCE [LARGE SCALE GENOMIC DNA]</scope>
    <source>
        <strain>ATCC BAA-894</strain>
    </source>
</reference>
<feature type="chain" id="PRO_1000049844" description="3-hydroxyacyl-[acyl-carrier-protein] dehydratase FabZ">
    <location>
        <begin position="1"/>
        <end position="151"/>
    </location>
</feature>
<feature type="active site" evidence="1">
    <location>
        <position position="54"/>
    </location>
</feature>
<accession>A7MI19</accession>
<name>FABZ_CROS8</name>
<sequence>MTTETHTLHIEEILELLPHRYPFLLVDRVLDFEEGRFLRAVKNVSVNEPFFQGHFPGKPIFPGVLILEAMAQATGILAFKSVGKLEPGELYYFAGIDEARFKRPVVPGDQMVMEVTFEKTRRGVTRFKGVALVDGKVVCEATMMCARSREA</sequence>
<keyword id="KW-0963">Cytoplasm</keyword>
<keyword id="KW-0441">Lipid A biosynthesis</keyword>
<keyword id="KW-0444">Lipid biosynthesis</keyword>
<keyword id="KW-0443">Lipid metabolism</keyword>
<keyword id="KW-0456">Lyase</keyword>
<keyword id="KW-1185">Reference proteome</keyword>
<gene>
    <name evidence="1" type="primary">fabZ</name>
    <name type="ordered locus">ESA_03161</name>
</gene>
<organism>
    <name type="scientific">Cronobacter sakazakii (strain ATCC BAA-894)</name>
    <name type="common">Enterobacter sakazakii</name>
    <dbReference type="NCBI Taxonomy" id="290339"/>
    <lineage>
        <taxon>Bacteria</taxon>
        <taxon>Pseudomonadati</taxon>
        <taxon>Pseudomonadota</taxon>
        <taxon>Gammaproteobacteria</taxon>
        <taxon>Enterobacterales</taxon>
        <taxon>Enterobacteriaceae</taxon>
        <taxon>Cronobacter</taxon>
    </lineage>
</organism>
<comment type="function">
    <text evidence="1">Involved in unsaturated fatty acids biosynthesis. Catalyzes the dehydration of short chain beta-hydroxyacyl-ACPs and long chain saturated and unsaturated beta-hydroxyacyl-ACPs.</text>
</comment>
<comment type="catalytic activity">
    <reaction evidence="1">
        <text>a (3R)-hydroxyacyl-[ACP] = a (2E)-enoyl-[ACP] + H2O</text>
        <dbReference type="Rhea" id="RHEA:13097"/>
        <dbReference type="Rhea" id="RHEA-COMP:9925"/>
        <dbReference type="Rhea" id="RHEA-COMP:9945"/>
        <dbReference type="ChEBI" id="CHEBI:15377"/>
        <dbReference type="ChEBI" id="CHEBI:78784"/>
        <dbReference type="ChEBI" id="CHEBI:78827"/>
        <dbReference type="EC" id="4.2.1.59"/>
    </reaction>
</comment>
<comment type="subcellular location">
    <subcellularLocation>
        <location evidence="1">Cytoplasm</location>
    </subcellularLocation>
</comment>
<comment type="similarity">
    <text evidence="1">Belongs to the thioester dehydratase family. FabZ subfamily.</text>
</comment>